<accession>A7FE06</accession>
<keyword id="KW-0413">Isomerase</keyword>
<proteinExistence type="inferred from homology"/>
<comment type="catalytic activity">
    <reaction evidence="1">
        <text>D-glucuronate = D-fructuronate</text>
        <dbReference type="Rhea" id="RHEA:13049"/>
        <dbReference type="ChEBI" id="CHEBI:58720"/>
        <dbReference type="ChEBI" id="CHEBI:59863"/>
        <dbReference type="EC" id="5.3.1.12"/>
    </reaction>
</comment>
<comment type="catalytic activity">
    <reaction evidence="1">
        <text>aldehydo-D-galacturonate = keto-D-tagaturonate</text>
        <dbReference type="Rhea" id="RHEA:27702"/>
        <dbReference type="ChEBI" id="CHEBI:12952"/>
        <dbReference type="ChEBI" id="CHEBI:17886"/>
        <dbReference type="EC" id="5.3.1.12"/>
    </reaction>
</comment>
<comment type="pathway">
    <text evidence="1">Carbohydrate metabolism; pentose and glucuronate interconversion.</text>
</comment>
<comment type="similarity">
    <text evidence="1">Belongs to the metallo-dependent hydrolases superfamily. Uronate isomerase family.</text>
</comment>
<protein>
    <recommendedName>
        <fullName evidence="1">Uronate isomerase</fullName>
        <ecNumber evidence="1">5.3.1.12</ecNumber>
    </recommendedName>
    <alternativeName>
        <fullName evidence="1">Glucuronate isomerase</fullName>
    </alternativeName>
    <alternativeName>
        <fullName evidence="1">Uronic isomerase</fullName>
    </alternativeName>
</protein>
<reference key="1">
    <citation type="journal article" date="2007" name="PLoS Genet.">
        <title>The complete genome sequence of Yersinia pseudotuberculosis IP31758, the causative agent of Far East scarlet-like fever.</title>
        <authorList>
            <person name="Eppinger M."/>
            <person name="Rosovitz M.J."/>
            <person name="Fricke W.F."/>
            <person name="Rasko D.A."/>
            <person name="Kokorina G."/>
            <person name="Fayolle C."/>
            <person name="Lindler L.E."/>
            <person name="Carniel E."/>
            <person name="Ravel J."/>
        </authorList>
    </citation>
    <scope>NUCLEOTIDE SEQUENCE [LARGE SCALE GENOMIC DNA]</scope>
    <source>
        <strain>IP 31758</strain>
    </source>
</reference>
<dbReference type="EC" id="5.3.1.12" evidence="1"/>
<dbReference type="EMBL" id="CP000720">
    <property type="protein sequence ID" value="ABS48628.1"/>
    <property type="molecule type" value="Genomic_DNA"/>
</dbReference>
<dbReference type="RefSeq" id="WP_002210410.1">
    <property type="nucleotide sequence ID" value="NC_009708.1"/>
</dbReference>
<dbReference type="SMR" id="A7FE06"/>
<dbReference type="GeneID" id="57974037"/>
<dbReference type="KEGG" id="ypi:YpsIP31758_0491"/>
<dbReference type="HOGENOM" id="CLU_044465_1_0_6"/>
<dbReference type="UniPathway" id="UPA00246"/>
<dbReference type="Proteomes" id="UP000002412">
    <property type="component" value="Chromosome"/>
</dbReference>
<dbReference type="GO" id="GO:0008880">
    <property type="term" value="F:glucuronate isomerase activity"/>
    <property type="evidence" value="ECO:0007669"/>
    <property type="project" value="UniProtKB-UniRule"/>
</dbReference>
<dbReference type="GO" id="GO:0019698">
    <property type="term" value="P:D-galacturonate catabolic process"/>
    <property type="evidence" value="ECO:0007669"/>
    <property type="project" value="TreeGrafter"/>
</dbReference>
<dbReference type="GO" id="GO:0042840">
    <property type="term" value="P:D-glucuronate catabolic process"/>
    <property type="evidence" value="ECO:0007669"/>
    <property type="project" value="TreeGrafter"/>
</dbReference>
<dbReference type="Gene3D" id="3.20.20.140">
    <property type="entry name" value="Metal-dependent hydrolases"/>
    <property type="match status" value="1"/>
</dbReference>
<dbReference type="Gene3D" id="1.10.2020.10">
    <property type="entry name" value="uronate isomerase, domain 2, chain A"/>
    <property type="match status" value="1"/>
</dbReference>
<dbReference type="HAMAP" id="MF_00675">
    <property type="entry name" value="UxaC"/>
    <property type="match status" value="1"/>
</dbReference>
<dbReference type="InterPro" id="IPR032466">
    <property type="entry name" value="Metal_Hydrolase"/>
</dbReference>
<dbReference type="InterPro" id="IPR003766">
    <property type="entry name" value="Uronate_isomerase"/>
</dbReference>
<dbReference type="NCBIfam" id="NF002794">
    <property type="entry name" value="PRK02925.1"/>
    <property type="match status" value="1"/>
</dbReference>
<dbReference type="PANTHER" id="PTHR30068">
    <property type="entry name" value="URONATE ISOMERASE"/>
    <property type="match status" value="1"/>
</dbReference>
<dbReference type="PANTHER" id="PTHR30068:SF4">
    <property type="entry name" value="URONATE ISOMERASE"/>
    <property type="match status" value="1"/>
</dbReference>
<dbReference type="Pfam" id="PF02614">
    <property type="entry name" value="UxaC"/>
    <property type="match status" value="1"/>
</dbReference>
<dbReference type="SUPFAM" id="SSF51556">
    <property type="entry name" value="Metallo-dependent hydrolases"/>
    <property type="match status" value="1"/>
</dbReference>
<evidence type="ECO:0000255" key="1">
    <source>
        <dbReference type="HAMAP-Rule" id="MF_00675"/>
    </source>
</evidence>
<name>UXAC_YERP3</name>
<organism>
    <name type="scientific">Yersinia pseudotuberculosis serotype O:1b (strain IP 31758)</name>
    <dbReference type="NCBI Taxonomy" id="349747"/>
    <lineage>
        <taxon>Bacteria</taxon>
        <taxon>Pseudomonadati</taxon>
        <taxon>Pseudomonadota</taxon>
        <taxon>Gammaproteobacteria</taxon>
        <taxon>Enterobacterales</taxon>
        <taxon>Yersiniaceae</taxon>
        <taxon>Yersinia</taxon>
    </lineage>
</organism>
<gene>
    <name evidence="1" type="primary">uxaC</name>
    <name type="ordered locus">YpsIP31758_0491</name>
</gene>
<feature type="chain" id="PRO_1000061953" description="Uronate isomerase">
    <location>
        <begin position="1"/>
        <end position="469"/>
    </location>
</feature>
<sequence>MSQFLTEDFLLDTEFARRLYHDYAKDQPIFDYHCHLPPEQIAENYRFKNMYDIWLKGDHYKWRAMRTNGVAERLCTGDASDREKFDAWAATVPHTIGNPLYHWTHLELRRPFGITGKLLSPATSEEIWQRGNELLAQDPFSARGIMQQMNVKMVGTTDDPIDDLRHHKAIAADGSFNIKVLPSWRPDKAFNIEAAGFNDYMQRLEAAADTSISRFADLCVALNKRMDHFAAHGCKVSDHALDVVVYGEADETTLDAILARRLAGNQPSTEEIAQFKTAVLLFLSGEYHRREWVQQYHIGALRNNNSRMFNLVGPDIGFDSINDQPLAQPLSRLLDAQGLRNALPKTILYCLNPRDNEVIGTMVGNFQGEGEAGKMQFGSGWWFNDQKDGMQRQMTQLAQLGLLSRFVGMLTDSRSFLSYTRHEYFRRILCQMIGRWVADGEAPADIALLGAMVKNICFDNAQQYFAIEL</sequence>